<name>GATB_NATPD</name>
<organism>
    <name type="scientific">Natronomonas pharaonis (strain ATCC 35678 / DSM 2160 / CIP 103997 / JCM 8858 / NBRC 14720 / NCIMB 2260 / Gabara)</name>
    <name type="common">Halobacterium pharaonis</name>
    <dbReference type="NCBI Taxonomy" id="348780"/>
    <lineage>
        <taxon>Archaea</taxon>
        <taxon>Methanobacteriati</taxon>
        <taxon>Methanobacteriota</taxon>
        <taxon>Stenosarchaea group</taxon>
        <taxon>Halobacteria</taxon>
        <taxon>Halobacteriales</taxon>
        <taxon>Haloarculaceae</taxon>
        <taxon>Natronomonas</taxon>
    </lineage>
</organism>
<comment type="function">
    <text evidence="1">Allows the formation of correctly charged Asn-tRNA(Asn) or Gln-tRNA(Gln) through the transamidation of misacylated Asp-tRNA(Asn) or Glu-tRNA(Gln) in organisms which lack either or both of asparaginyl-tRNA or glutaminyl-tRNA synthetases. The reaction takes place in the presence of glutamine and ATP through an activated phospho-Asp-tRNA(Asn) or phospho-Glu-tRNA(Gln).</text>
</comment>
<comment type="catalytic activity">
    <reaction evidence="1">
        <text>L-glutamyl-tRNA(Gln) + L-glutamine + ATP + H2O = L-glutaminyl-tRNA(Gln) + L-glutamate + ADP + phosphate + H(+)</text>
        <dbReference type="Rhea" id="RHEA:17521"/>
        <dbReference type="Rhea" id="RHEA-COMP:9681"/>
        <dbReference type="Rhea" id="RHEA-COMP:9684"/>
        <dbReference type="ChEBI" id="CHEBI:15377"/>
        <dbReference type="ChEBI" id="CHEBI:15378"/>
        <dbReference type="ChEBI" id="CHEBI:29985"/>
        <dbReference type="ChEBI" id="CHEBI:30616"/>
        <dbReference type="ChEBI" id="CHEBI:43474"/>
        <dbReference type="ChEBI" id="CHEBI:58359"/>
        <dbReference type="ChEBI" id="CHEBI:78520"/>
        <dbReference type="ChEBI" id="CHEBI:78521"/>
        <dbReference type="ChEBI" id="CHEBI:456216"/>
    </reaction>
</comment>
<comment type="catalytic activity">
    <reaction evidence="1">
        <text>L-aspartyl-tRNA(Asn) + L-glutamine + ATP + H2O = L-asparaginyl-tRNA(Asn) + L-glutamate + ADP + phosphate + 2 H(+)</text>
        <dbReference type="Rhea" id="RHEA:14513"/>
        <dbReference type="Rhea" id="RHEA-COMP:9674"/>
        <dbReference type="Rhea" id="RHEA-COMP:9677"/>
        <dbReference type="ChEBI" id="CHEBI:15377"/>
        <dbReference type="ChEBI" id="CHEBI:15378"/>
        <dbReference type="ChEBI" id="CHEBI:29985"/>
        <dbReference type="ChEBI" id="CHEBI:30616"/>
        <dbReference type="ChEBI" id="CHEBI:43474"/>
        <dbReference type="ChEBI" id="CHEBI:58359"/>
        <dbReference type="ChEBI" id="CHEBI:78515"/>
        <dbReference type="ChEBI" id="CHEBI:78516"/>
        <dbReference type="ChEBI" id="CHEBI:456216"/>
    </reaction>
</comment>
<comment type="subunit">
    <text evidence="1">Heterotrimer of A, B and C subunits.</text>
</comment>
<comment type="similarity">
    <text evidence="1">Belongs to the GatB/GatE family. GatB subfamily.</text>
</comment>
<dbReference type="EC" id="6.3.5.-" evidence="1"/>
<dbReference type="EMBL" id="CR936257">
    <property type="protein sequence ID" value="CAI48701.1"/>
    <property type="molecule type" value="Genomic_DNA"/>
</dbReference>
<dbReference type="RefSeq" id="WP_011322337.1">
    <property type="nucleotide sequence ID" value="NC_007426.1"/>
</dbReference>
<dbReference type="SMR" id="Q3IT33"/>
<dbReference type="STRING" id="348780.NP_1220A"/>
<dbReference type="EnsemblBacteria" id="CAI48701">
    <property type="protein sequence ID" value="CAI48701"/>
    <property type="gene ID" value="NP_1220A"/>
</dbReference>
<dbReference type="GeneID" id="3702360"/>
<dbReference type="KEGG" id="nph:NP_1220A"/>
<dbReference type="eggNOG" id="arCOG01718">
    <property type="taxonomic scope" value="Archaea"/>
</dbReference>
<dbReference type="HOGENOM" id="CLU_019240_0_0_2"/>
<dbReference type="OrthoDB" id="52755at2157"/>
<dbReference type="Proteomes" id="UP000002698">
    <property type="component" value="Chromosome"/>
</dbReference>
<dbReference type="GO" id="GO:0050566">
    <property type="term" value="F:asparaginyl-tRNA synthase (glutamine-hydrolyzing) activity"/>
    <property type="evidence" value="ECO:0007669"/>
    <property type="project" value="RHEA"/>
</dbReference>
<dbReference type="GO" id="GO:0005524">
    <property type="term" value="F:ATP binding"/>
    <property type="evidence" value="ECO:0007669"/>
    <property type="project" value="UniProtKB-KW"/>
</dbReference>
<dbReference type="GO" id="GO:0050567">
    <property type="term" value="F:glutaminyl-tRNA synthase (glutamine-hydrolyzing) activity"/>
    <property type="evidence" value="ECO:0007669"/>
    <property type="project" value="UniProtKB-UniRule"/>
</dbReference>
<dbReference type="GO" id="GO:0070681">
    <property type="term" value="P:glutaminyl-tRNAGln biosynthesis via transamidation"/>
    <property type="evidence" value="ECO:0007669"/>
    <property type="project" value="TreeGrafter"/>
</dbReference>
<dbReference type="GO" id="GO:0006412">
    <property type="term" value="P:translation"/>
    <property type="evidence" value="ECO:0007669"/>
    <property type="project" value="UniProtKB-UniRule"/>
</dbReference>
<dbReference type="FunFam" id="1.10.10.410:FF:000001">
    <property type="entry name" value="Aspartyl/glutamyl-tRNA(Asn/Gln) amidotransferase subunit B"/>
    <property type="match status" value="1"/>
</dbReference>
<dbReference type="Gene3D" id="1.10.10.410">
    <property type="match status" value="1"/>
</dbReference>
<dbReference type="Gene3D" id="1.10.150.380">
    <property type="entry name" value="GatB domain, N-terminal subdomain"/>
    <property type="match status" value="1"/>
</dbReference>
<dbReference type="HAMAP" id="MF_00121">
    <property type="entry name" value="GatB"/>
    <property type="match status" value="1"/>
</dbReference>
<dbReference type="InterPro" id="IPR017959">
    <property type="entry name" value="Asn/Gln-tRNA_amidoTrfase_suB/E"/>
</dbReference>
<dbReference type="InterPro" id="IPR006075">
    <property type="entry name" value="Asn/Gln-tRNA_Trfase_suB/E_cat"/>
</dbReference>
<dbReference type="InterPro" id="IPR018027">
    <property type="entry name" value="Asn/Gln_amidotransferase"/>
</dbReference>
<dbReference type="InterPro" id="IPR003789">
    <property type="entry name" value="Asn/Gln_tRNA_amidoTrase-B-like"/>
</dbReference>
<dbReference type="InterPro" id="IPR004413">
    <property type="entry name" value="GatB"/>
</dbReference>
<dbReference type="InterPro" id="IPR042114">
    <property type="entry name" value="GatB_C_1"/>
</dbReference>
<dbReference type="InterPro" id="IPR023168">
    <property type="entry name" value="GatB_Yqey_C_2"/>
</dbReference>
<dbReference type="InterPro" id="IPR017958">
    <property type="entry name" value="Gln-tRNA_amidoTrfase_suB_CS"/>
</dbReference>
<dbReference type="InterPro" id="IPR014746">
    <property type="entry name" value="Gln_synth/guanido_kin_cat_dom"/>
</dbReference>
<dbReference type="NCBIfam" id="TIGR00133">
    <property type="entry name" value="gatB"/>
    <property type="match status" value="1"/>
</dbReference>
<dbReference type="NCBIfam" id="NF004012">
    <property type="entry name" value="PRK05477.1-2"/>
    <property type="match status" value="1"/>
</dbReference>
<dbReference type="NCBIfam" id="NF004014">
    <property type="entry name" value="PRK05477.1-4"/>
    <property type="match status" value="1"/>
</dbReference>
<dbReference type="PANTHER" id="PTHR11659">
    <property type="entry name" value="GLUTAMYL-TRNA GLN AMIDOTRANSFERASE SUBUNIT B MITOCHONDRIAL AND PROKARYOTIC PET112-RELATED"/>
    <property type="match status" value="1"/>
</dbReference>
<dbReference type="PANTHER" id="PTHR11659:SF0">
    <property type="entry name" value="GLUTAMYL-TRNA(GLN) AMIDOTRANSFERASE SUBUNIT B, MITOCHONDRIAL"/>
    <property type="match status" value="1"/>
</dbReference>
<dbReference type="Pfam" id="PF02934">
    <property type="entry name" value="GatB_N"/>
    <property type="match status" value="1"/>
</dbReference>
<dbReference type="Pfam" id="PF02637">
    <property type="entry name" value="GatB_Yqey"/>
    <property type="match status" value="1"/>
</dbReference>
<dbReference type="SMART" id="SM00845">
    <property type="entry name" value="GatB_Yqey"/>
    <property type="match status" value="1"/>
</dbReference>
<dbReference type="SUPFAM" id="SSF89095">
    <property type="entry name" value="GatB/YqeY motif"/>
    <property type="match status" value="1"/>
</dbReference>
<dbReference type="SUPFAM" id="SSF55931">
    <property type="entry name" value="Glutamine synthetase/guanido kinase"/>
    <property type="match status" value="1"/>
</dbReference>
<dbReference type="PROSITE" id="PS01234">
    <property type="entry name" value="GATB"/>
    <property type="match status" value="1"/>
</dbReference>
<reference key="1">
    <citation type="journal article" date="2005" name="Genome Res.">
        <title>Living with two extremes: conclusions from the genome sequence of Natronomonas pharaonis.</title>
        <authorList>
            <person name="Falb M."/>
            <person name="Pfeiffer F."/>
            <person name="Palm P."/>
            <person name="Rodewald K."/>
            <person name="Hickmann V."/>
            <person name="Tittor J."/>
            <person name="Oesterhelt D."/>
        </authorList>
    </citation>
    <scope>NUCLEOTIDE SEQUENCE [LARGE SCALE GENOMIC DNA]</scope>
    <source>
        <strain>ATCC 35678 / DSM 2160 / CIP 103997 / JCM 8858 / NBRC 14720 / NCIMB 2260 / Gabara</strain>
    </source>
</reference>
<protein>
    <recommendedName>
        <fullName evidence="1">Aspartyl/glutamyl-tRNA(Asn/Gln) amidotransferase subunit B</fullName>
        <shortName evidence="1">Asp/Glu-ADT subunit B</shortName>
        <ecNumber evidence="1">6.3.5.-</ecNumber>
    </recommendedName>
</protein>
<evidence type="ECO:0000255" key="1">
    <source>
        <dbReference type="HAMAP-Rule" id="MF_00121"/>
    </source>
</evidence>
<gene>
    <name evidence="1" type="primary">gatB</name>
    <name type="ordered locus">NP_1220A</name>
</gene>
<accession>Q3IT33</accession>
<sequence length="496" mass="54734">MTAQTAEEHSLTAVIGLEVHVQLETDTKIFCGCSTDADDNEEPNTRTCPVCLGLPGALPVLNEGAVEAAVKVGKALSSDIPEETRFHRKNYYYPDLPKNFQITQYDAPICDGGELEFAVDDERRTVAIERAHLEEDPGSLSHAGGSIDTAEHTLVDYNRAGTPLLEIVTAPDFRSAAEVRAFLAKLTEVLEYLGVFDVTRDGSLRVDANLSIVDSDAVGENGSIDEATLEAANRTEVKNISSHKGAEKALAYEETRQKNAVQRGREVEQETRHWDESRGITVSMRSKEEEKDYRYFREADIPPLRVSDWKEKIDIPELPDARRERFREEYGLDAETASKLTSTKQVADFYERVADTFAPELAATWVADNLLGELNYRDMEITDIEGRLDEFAHLIELVDEDEITVKNAEEVVLRRMLDDGQPPGDIVEAEDLGKTDDDAVAAAVTAAIEENPDAVEDYHAGEDGALNFLVGQVMQETGGSADPGTVNELLRAELDG</sequence>
<proteinExistence type="inferred from homology"/>
<feature type="chain" id="PRO_0000241304" description="Aspartyl/glutamyl-tRNA(Asn/Gln) amidotransferase subunit B">
    <location>
        <begin position="1"/>
        <end position="496"/>
    </location>
</feature>
<keyword id="KW-0067">ATP-binding</keyword>
<keyword id="KW-0436">Ligase</keyword>
<keyword id="KW-0547">Nucleotide-binding</keyword>
<keyword id="KW-0648">Protein biosynthesis</keyword>
<keyword id="KW-1185">Reference proteome</keyword>